<protein>
    <recommendedName>
        <fullName evidence="8">Chitin synthase 7</fullName>
        <ecNumber evidence="10">2.4.1.16</ecNumber>
    </recommendedName>
    <alternativeName>
        <fullName evidence="9">Chitin-UDP acetyl-glucosaminyl transferase 7</fullName>
    </alternativeName>
</protein>
<feature type="chain" id="PRO_0000270623" description="Chitin synthase 7">
    <location>
        <begin position="1"/>
        <end position="1273"/>
    </location>
</feature>
<feature type="topological domain" description="Cytoplasmic" evidence="9">
    <location>
        <begin position="1"/>
        <end position="79"/>
    </location>
</feature>
<feature type="transmembrane region" description="Helical" evidence="2">
    <location>
        <begin position="80"/>
        <end position="100"/>
    </location>
</feature>
<feature type="topological domain" description="Extracellular" evidence="9">
    <location>
        <begin position="101"/>
        <end position="117"/>
    </location>
</feature>
<feature type="transmembrane region" description="Helical" evidence="2">
    <location>
        <begin position="118"/>
        <end position="138"/>
    </location>
</feature>
<feature type="topological domain" description="Cytoplasmic" evidence="9">
    <location>
        <begin position="139"/>
        <end position="360"/>
    </location>
</feature>
<feature type="transmembrane region" description="Helical" evidence="2">
    <location>
        <begin position="361"/>
        <end position="381"/>
    </location>
</feature>
<feature type="topological domain" description="Extracellular" evidence="9">
    <location>
        <begin position="382"/>
        <end position="820"/>
    </location>
</feature>
<feature type="transmembrane region" description="Helical" evidence="2">
    <location>
        <begin position="821"/>
        <end position="841"/>
    </location>
</feature>
<feature type="topological domain" description="Cytoplasmic" evidence="9">
    <location>
        <begin position="842"/>
        <end position="857"/>
    </location>
</feature>
<feature type="transmembrane region" description="Helical" evidence="2">
    <location>
        <begin position="858"/>
        <end position="878"/>
    </location>
</feature>
<feature type="topological domain" description="Extracellular" evidence="9">
    <location>
        <begin position="879"/>
        <end position="881"/>
    </location>
</feature>
<feature type="transmembrane region" description="Helical" evidence="2">
    <location>
        <begin position="882"/>
        <end position="902"/>
    </location>
</feature>
<feature type="topological domain" description="Cytoplasmic" evidence="9">
    <location>
        <begin position="903"/>
        <end position="1273"/>
    </location>
</feature>
<feature type="region of interest" description="Disordered" evidence="4">
    <location>
        <begin position="1"/>
        <end position="69"/>
    </location>
</feature>
<feature type="region of interest" description="Disordered" evidence="4">
    <location>
        <begin position="416"/>
        <end position="451"/>
    </location>
</feature>
<feature type="region of interest" description="Disordered" evidence="4">
    <location>
        <begin position="966"/>
        <end position="1009"/>
    </location>
</feature>
<feature type="region of interest" description="Disordered" evidence="4">
    <location>
        <begin position="1126"/>
        <end position="1273"/>
    </location>
</feature>
<feature type="compositionally biased region" description="Low complexity" evidence="4">
    <location>
        <begin position="1000"/>
        <end position="1009"/>
    </location>
</feature>
<feature type="compositionally biased region" description="Pro residues" evidence="4">
    <location>
        <begin position="1215"/>
        <end position="1232"/>
    </location>
</feature>
<feature type="compositionally biased region" description="Low complexity" evidence="4">
    <location>
        <begin position="1233"/>
        <end position="1246"/>
    </location>
</feature>
<feature type="glycosylation site" description="N-linked (GlcNAc...) asparagine" evidence="3">
    <location>
        <position position="412"/>
    </location>
</feature>
<feature type="glycosylation site" description="N-linked (GlcNAc...) asparagine" evidence="3">
    <location>
        <position position="667"/>
    </location>
</feature>
<feature type="glycosylation site" description="N-linked (GlcNAc...) asparagine" evidence="3">
    <location>
        <position position="796"/>
    </location>
</feature>
<reference key="1">
    <citation type="journal article" date="2006" name="Nature">
        <title>Insights from the genome of the biotrophic fungal plant pathogen Ustilago maydis.</title>
        <authorList>
            <person name="Kaemper J."/>
            <person name="Kahmann R."/>
            <person name="Boelker M."/>
            <person name="Ma L.-J."/>
            <person name="Brefort T."/>
            <person name="Saville B.J."/>
            <person name="Banuett F."/>
            <person name="Kronstad J.W."/>
            <person name="Gold S.E."/>
            <person name="Mueller O."/>
            <person name="Perlin M.H."/>
            <person name="Woesten H.A.B."/>
            <person name="de Vries R."/>
            <person name="Ruiz-Herrera J."/>
            <person name="Reynaga-Pena C.G."/>
            <person name="Snetselaar K."/>
            <person name="McCann M."/>
            <person name="Perez-Martin J."/>
            <person name="Feldbruegge M."/>
            <person name="Basse C.W."/>
            <person name="Steinberg G."/>
            <person name="Ibeas J.I."/>
            <person name="Holloman W."/>
            <person name="Guzman P."/>
            <person name="Farman M.L."/>
            <person name="Stajich J.E."/>
            <person name="Sentandreu R."/>
            <person name="Gonzalez-Prieto J.M."/>
            <person name="Kennell J.C."/>
            <person name="Molina L."/>
            <person name="Schirawski J."/>
            <person name="Mendoza-Mendoza A."/>
            <person name="Greilinger D."/>
            <person name="Muench K."/>
            <person name="Roessel N."/>
            <person name="Scherer M."/>
            <person name="Vranes M."/>
            <person name="Ladendorf O."/>
            <person name="Vincon V."/>
            <person name="Fuchs U."/>
            <person name="Sandrock B."/>
            <person name="Meng S."/>
            <person name="Ho E.C.H."/>
            <person name="Cahill M.J."/>
            <person name="Boyce K.J."/>
            <person name="Klose J."/>
            <person name="Klosterman S.J."/>
            <person name="Deelstra H.J."/>
            <person name="Ortiz-Castellanos L."/>
            <person name="Li W."/>
            <person name="Sanchez-Alonso P."/>
            <person name="Schreier P.H."/>
            <person name="Haeuser-Hahn I."/>
            <person name="Vaupel M."/>
            <person name="Koopmann E."/>
            <person name="Friedrich G."/>
            <person name="Voss H."/>
            <person name="Schlueter T."/>
            <person name="Margolis J."/>
            <person name="Platt D."/>
            <person name="Swimmer C."/>
            <person name="Gnirke A."/>
            <person name="Chen F."/>
            <person name="Vysotskaia V."/>
            <person name="Mannhaupt G."/>
            <person name="Gueldener U."/>
            <person name="Muensterkoetter M."/>
            <person name="Haase D."/>
            <person name="Oesterheld M."/>
            <person name="Mewes H.-W."/>
            <person name="Mauceli E.W."/>
            <person name="DeCaprio D."/>
            <person name="Wade C.M."/>
            <person name="Butler J."/>
            <person name="Young S.K."/>
            <person name="Jaffe D.B."/>
            <person name="Calvo S.E."/>
            <person name="Nusbaum C."/>
            <person name="Galagan J.E."/>
            <person name="Birren B.W."/>
        </authorList>
    </citation>
    <scope>NUCLEOTIDE SEQUENCE [LARGE SCALE GENOMIC DNA]</scope>
    <source>
        <strain>DSM 14603 / FGSC 9021 / UM521</strain>
    </source>
</reference>
<reference key="2">
    <citation type="submission" date="2014-09" db="EMBL/GenBank/DDBJ databases">
        <authorList>
            <person name="Gueldener U."/>
            <person name="Muensterkoetter M."/>
            <person name="Walter M.C."/>
            <person name="Mannhaupt G."/>
            <person name="Kahmann R."/>
        </authorList>
    </citation>
    <scope>GENOME REANNOTATION</scope>
    <source>
        <strain>DSM 14603 / FGSC 9021 / UM521</strain>
    </source>
</reference>
<reference key="3">
    <citation type="journal article" date="2006" name="Plant Cell">
        <title>Polar localizing class V myosin chitin synthases are essential during early plant infection in the plant pathogenic fungus Ustilago maydis.</title>
        <authorList>
            <person name="Weber I."/>
            <person name="Assmann D."/>
            <person name="Thines E."/>
            <person name="Steinberg G."/>
        </authorList>
    </citation>
    <scope>FUNCTION</scope>
    <scope>SUBCELLULAR LOCATION</scope>
</reference>
<reference key="4">
    <citation type="journal article" date="2012" name="Curr. Microbiol.">
        <title>Transcriptional regulation of the genes encoding chitin and beta-1,3-glucan synthases from Ustilago maydis.</title>
        <authorList>
            <person name="Robledo-Briones M."/>
            <person name="Ruiz-Herrera J."/>
        </authorList>
    </citation>
    <scope>INDUCTION</scope>
</reference>
<reference key="5">
    <citation type="journal article" date="2013" name="FEMS Yeast Res.">
        <title>Regulation of genes involved in cell wall synthesis and structure during Ustilago maydis dimorphism.</title>
        <authorList>
            <person name="Robledo-Briones M."/>
            <person name="Ruiz-Herrera J."/>
        </authorList>
    </citation>
    <scope>INDUCTION</scope>
</reference>
<name>CHIS7_MYCMD</name>
<sequence>MPAVERNAPFTKTFIRKPGQRNDTSIPLHTEAPPPLRQPTRIARAKTLTRPERSQPQVPLINPSSGGPGFSAASRSKHRFSWWTAFSLFVTFWAPSPLLSSCCGLKDKQSRQAWREKVSLVFIAILLGGFIGFITMGLNAALCPSASSHSPNTYSRIGTGGAILGVHGWAFDIAQAHHLPEAPALFSLSTSRPGSDISSLFARSTSDQSPACRGTTAAYAADASCVALNGTLLKDCPLGPLSPATFAQYGMYNQTRKIGYGWEDVESANFSNFLVLDGVVLNMSPYLKANPSPIAADVVDLAIRQQLATSPHRGRDATITFYTNPTTRNAIKCLTQKYVAGYIDKITPGCFISNLVLYCSLVVILAIVLIRFFMAVWFAWFMAGRMSSPPRPSRRRRLAPNVLPEGAMISLNSSGAAPWANKQRPPPSQPARRRRDSAQSATPSVPDSLSVHHIGDEPYVVCLVTAYSENEEGISTTLTSLSETHYSDQRKLLFVVADGMVTGSGESMSTPDVCVSLLEADPRFGTPIPMSFVSIASGKKEHNMAMVYAGHYTRATGRRTPMVVVVKCGAPEEAADSKPGNRGKRDSQMILMNFFQRVTYNDRMTPLDYDLFRKVHTLMGVTPDFFELCLMVDADTMVYPKSMKTLTNCMMRDPMIMGACGETRIANKTQSWVTMIQVYEYFISHHQAKAFESVFGGVTCLPGCFSMYRIKARKQTDDDWVPIIVKPEVTREYSQSVVTTLHQKNLLLLGEDRFLTTTLLRTFPNRKMVFCPEARCKTEVPHTFKMLLSQRRRWINSTIHNLMELVLVRDLCGTFCFSMQFVVFMDLLGTAVLPISIALTYTLVVTYCLNPPHSFTEAIPLMLLVAVIGMPALLILLATRKVVYVLWMLIYLLALPVWNFVLPVYSFWHFDDFSWGETRKVEGEAKQTGHGDEGGSATGNAVPLRRWEDWERSRLRKKKREEKRRRELERQFGSGFHNDNASDGDPDRKEAGMPLSRPGSDSFSDSVTVSDFDDDKWGNQIGGYDETLPPPVQIVRHSVWIGDQEVIIDTEDMEKMLETGWDDKAFRARNLSSASSTNALLQAQQPQYPSAVNRNRLSQMGAFATKRDAPAVPEIPARYSMYVQNNGGGRPANGHGNSNGHYEPGSYEMERTPSPGEYASLIRGGAPSPCSPGFGPAQPYGHSSAVSGGAGQYSTGSHARQRSGGANAAYNQPHQHPPQPSQPPQPPQPAQPTRPGGAPAAPPRGAGSQGSGFAGARPSNPTGRGRSYHDRFS</sequence>
<evidence type="ECO:0000250" key="1"/>
<evidence type="ECO:0000255" key="2"/>
<evidence type="ECO:0000255" key="3">
    <source>
        <dbReference type="PROSITE-ProRule" id="PRU00498"/>
    </source>
</evidence>
<evidence type="ECO:0000256" key="4">
    <source>
        <dbReference type="SAM" id="MobiDB-lite"/>
    </source>
</evidence>
<evidence type="ECO:0000269" key="5">
    <source>
    </source>
</evidence>
<evidence type="ECO:0000269" key="6">
    <source>
    </source>
</evidence>
<evidence type="ECO:0000269" key="7">
    <source>
    </source>
</evidence>
<evidence type="ECO:0000303" key="8">
    <source>
    </source>
</evidence>
<evidence type="ECO:0000305" key="9"/>
<evidence type="ECO:0000305" key="10">
    <source ref="2"/>
</evidence>
<gene>
    <name evidence="8" type="primary">CHS7</name>
    <name type="ORF">UMAG_05480</name>
</gene>
<comment type="function">
    <text evidence="5">Polymerizes chitin, a structural polymer of the cell wall and septum, by transferring the sugar moiety of UDP-GlcNAc to the non-reducing end of the growing chitin polymer.</text>
</comment>
<comment type="catalytic activity">
    <reaction evidence="10">
        <text>[(1-&gt;4)-N-acetyl-beta-D-glucosaminyl](n) + UDP-N-acetyl-alpha-D-glucosamine = [(1-&gt;4)-N-acetyl-beta-D-glucosaminyl](n+1) + UDP + H(+)</text>
        <dbReference type="Rhea" id="RHEA:16637"/>
        <dbReference type="Rhea" id="RHEA-COMP:9593"/>
        <dbReference type="Rhea" id="RHEA-COMP:9595"/>
        <dbReference type="ChEBI" id="CHEBI:15378"/>
        <dbReference type="ChEBI" id="CHEBI:17029"/>
        <dbReference type="ChEBI" id="CHEBI:57705"/>
        <dbReference type="ChEBI" id="CHEBI:58223"/>
        <dbReference type="EC" id="2.4.1.16"/>
    </reaction>
    <physiologicalReaction direction="left-to-right" evidence="10">
        <dbReference type="Rhea" id="RHEA:16638"/>
    </physiologicalReaction>
</comment>
<comment type="subcellular location">
    <subcellularLocation>
        <location evidence="5">Cell membrane</location>
        <topology evidence="5">Multi-pass membrane protein</topology>
    </subcellularLocation>
    <subcellularLocation>
        <location evidence="5">Cytoplasmic vesicle membrane</location>
        <topology evidence="5">Multi-pass membrane protein</topology>
    </subcellularLocation>
    <text evidence="1">A constitutive cytoplasmic pool is present that localizes to intracellular microvesicles termed chitosomes. Chitosomes constitute a separate secretory route distinct from the typical secretory pathway and serve as a vehicle for delivering the enzyme to the sites on the cell surface where polysaccharide sythesis takes place (By similarity). Localizes to septa of yeast-like cells and to the basal septum separating the living tip cell from the vacuolated part in hyphae. Also localizes to the growing bud tip in yeast-like cells and to the tip of the hyphae.</text>
</comment>
<comment type="induction">
    <text evidence="6 7">Expression is down-regulated in the mycelium and shows a maximal expression in the log phase at about 14-18 h of incubation (PubMed:22538468). Shows a late increase in transcription at the stationary phase in both yeast and mycelial cells (PubMed:22538468, PubMed:23167842). Highly expressed during the stage of white tumors of plant infection (PubMed:22538468).</text>
</comment>
<comment type="similarity">
    <text evidence="9">Belongs to the chitin synthase family. Class IV subfamily.</text>
</comment>
<keyword id="KW-1003">Cell membrane</keyword>
<keyword id="KW-0961">Cell wall biogenesis/degradation</keyword>
<keyword id="KW-0968">Cytoplasmic vesicle</keyword>
<keyword id="KW-0325">Glycoprotein</keyword>
<keyword id="KW-0328">Glycosyltransferase</keyword>
<keyword id="KW-0472">Membrane</keyword>
<keyword id="KW-1185">Reference proteome</keyword>
<keyword id="KW-0808">Transferase</keyword>
<keyword id="KW-0812">Transmembrane</keyword>
<keyword id="KW-1133">Transmembrane helix</keyword>
<dbReference type="EC" id="2.4.1.16" evidence="10"/>
<dbReference type="EMBL" id="CM003157">
    <property type="protein sequence ID" value="KIS66485.1"/>
    <property type="molecule type" value="Genomic_DNA"/>
</dbReference>
<dbReference type="RefSeq" id="XP_011391813.1">
    <property type="nucleotide sequence ID" value="XM_011393511.1"/>
</dbReference>
<dbReference type="STRING" id="237631.Q4P333"/>
<dbReference type="GlyCosmos" id="Q4P333">
    <property type="glycosylation" value="3 sites, No reported glycans"/>
</dbReference>
<dbReference type="EnsemblFungi" id="KIS66485">
    <property type="protein sequence ID" value="KIS66485"/>
    <property type="gene ID" value="UMAG_05480"/>
</dbReference>
<dbReference type="GeneID" id="23565362"/>
<dbReference type="KEGG" id="uma:UMAG_05480"/>
<dbReference type="VEuPathDB" id="FungiDB:UMAG_05480"/>
<dbReference type="eggNOG" id="KOG2571">
    <property type="taxonomic scope" value="Eukaryota"/>
</dbReference>
<dbReference type="HOGENOM" id="CLU_002572_0_0_1"/>
<dbReference type="InParanoid" id="Q4P333"/>
<dbReference type="OMA" id="KYLVNCM"/>
<dbReference type="OrthoDB" id="370884at2759"/>
<dbReference type="BRENDA" id="2.4.1.16">
    <property type="organism ID" value="6587"/>
</dbReference>
<dbReference type="PHI-base" id="PHI:1113"/>
<dbReference type="Proteomes" id="UP000000561">
    <property type="component" value="Chromosome 18"/>
</dbReference>
<dbReference type="GO" id="GO:0071944">
    <property type="term" value="C:cell periphery"/>
    <property type="evidence" value="ECO:0000318"/>
    <property type="project" value="GO_Central"/>
</dbReference>
<dbReference type="GO" id="GO:0030428">
    <property type="term" value="C:cell septum"/>
    <property type="evidence" value="ECO:0000318"/>
    <property type="project" value="GO_Central"/>
</dbReference>
<dbReference type="GO" id="GO:0030659">
    <property type="term" value="C:cytoplasmic vesicle membrane"/>
    <property type="evidence" value="ECO:0007669"/>
    <property type="project" value="UniProtKB-SubCell"/>
</dbReference>
<dbReference type="GO" id="GO:0005886">
    <property type="term" value="C:plasma membrane"/>
    <property type="evidence" value="ECO:0007669"/>
    <property type="project" value="UniProtKB-SubCell"/>
</dbReference>
<dbReference type="GO" id="GO:0004100">
    <property type="term" value="F:chitin synthase activity"/>
    <property type="evidence" value="ECO:0000318"/>
    <property type="project" value="GO_Central"/>
</dbReference>
<dbReference type="GO" id="GO:0071555">
    <property type="term" value="P:cell wall organization"/>
    <property type="evidence" value="ECO:0007669"/>
    <property type="project" value="UniProtKB-KW"/>
</dbReference>
<dbReference type="GO" id="GO:0006031">
    <property type="term" value="P:chitin biosynthetic process"/>
    <property type="evidence" value="ECO:0000318"/>
    <property type="project" value="GO_Central"/>
</dbReference>
<dbReference type="CDD" id="cd04190">
    <property type="entry name" value="Chitin_synth_C"/>
    <property type="match status" value="1"/>
</dbReference>
<dbReference type="InterPro" id="IPR004835">
    <property type="entry name" value="Chitin_synth"/>
</dbReference>
<dbReference type="InterPro" id="IPR054295">
    <property type="entry name" value="CHS4-like_dom"/>
</dbReference>
<dbReference type="InterPro" id="IPR029044">
    <property type="entry name" value="Nucleotide-diphossugar_trans"/>
</dbReference>
<dbReference type="PANTHER" id="PTHR22914">
    <property type="entry name" value="CHITIN SYNTHASE"/>
    <property type="match status" value="1"/>
</dbReference>
<dbReference type="PANTHER" id="PTHR22914:SF41">
    <property type="entry name" value="CHITIN SYNTHASE 7"/>
    <property type="match status" value="1"/>
</dbReference>
<dbReference type="Pfam" id="PF03142">
    <property type="entry name" value="Chitin_synth_2"/>
    <property type="match status" value="1"/>
</dbReference>
<dbReference type="Pfam" id="PF22997">
    <property type="entry name" value="CHS4"/>
    <property type="match status" value="1"/>
</dbReference>
<dbReference type="SUPFAM" id="SSF53448">
    <property type="entry name" value="Nucleotide-diphospho-sugar transferases"/>
    <property type="match status" value="1"/>
</dbReference>
<proteinExistence type="evidence at transcript level"/>
<organism>
    <name type="scientific">Mycosarcoma maydis</name>
    <name type="common">Corn smut fungus</name>
    <name type="synonym">Ustilago maydis</name>
    <dbReference type="NCBI Taxonomy" id="5270"/>
    <lineage>
        <taxon>Eukaryota</taxon>
        <taxon>Fungi</taxon>
        <taxon>Dikarya</taxon>
        <taxon>Basidiomycota</taxon>
        <taxon>Ustilaginomycotina</taxon>
        <taxon>Ustilaginomycetes</taxon>
        <taxon>Ustilaginales</taxon>
        <taxon>Ustilaginaceae</taxon>
        <taxon>Mycosarcoma</taxon>
    </lineage>
</organism>
<accession>Q4P333</accession>
<accession>A0A0D1DVE4</accession>